<reference key="1">
    <citation type="journal article" date="2003" name="Mol. Microbiol.">
        <title>Genome-based analysis of virulence genes in a non-biofilm-forming Staphylococcus epidermidis strain (ATCC 12228).</title>
        <authorList>
            <person name="Zhang Y.-Q."/>
            <person name="Ren S.-X."/>
            <person name="Li H.-L."/>
            <person name="Wang Y.-X."/>
            <person name="Fu G."/>
            <person name="Yang J."/>
            <person name="Qin Z.-Q."/>
            <person name="Miao Y.-G."/>
            <person name="Wang W.-Y."/>
            <person name="Chen R.-S."/>
            <person name="Shen Y."/>
            <person name="Chen Z."/>
            <person name="Yuan Z.-H."/>
            <person name="Zhao G.-P."/>
            <person name="Qu D."/>
            <person name="Danchin A."/>
            <person name="Wen Y.-M."/>
        </authorList>
    </citation>
    <scope>NUCLEOTIDE SEQUENCE [LARGE SCALE GENOMIC DNA]</scope>
    <source>
        <strain>ATCC 12228 / FDA PCI 1200</strain>
    </source>
</reference>
<sequence length="149" mass="16918">MKTNVIIDGDACPVVNSVIELTKGTGIFVTILRSFSHFSQQIQPEHVKIVYVDDGPDAVDYKIVELASNNDIVITQDYGLASLLIDKVHTVMHHKGNIYHSNNIQSLLDQRYLNAQIRRRGGRHKGPPPFTTEDRLKFEHAFRKIINQI</sequence>
<proteinExistence type="inferred from homology"/>
<dbReference type="EMBL" id="AE015929">
    <property type="protein sequence ID" value="AAO04048.1"/>
    <property type="molecule type" value="Genomic_DNA"/>
</dbReference>
<dbReference type="RefSeq" id="NP_764006.1">
    <property type="nucleotide sequence ID" value="NC_004461.1"/>
</dbReference>
<dbReference type="RefSeq" id="WP_001832102.1">
    <property type="nucleotide sequence ID" value="NZ_WBME01000018.1"/>
</dbReference>
<dbReference type="SMR" id="Q8CTJ9"/>
<dbReference type="KEGG" id="sep:SE_0451"/>
<dbReference type="PATRIC" id="fig|176280.10.peg.425"/>
<dbReference type="eggNOG" id="COG1671">
    <property type="taxonomic scope" value="Bacteria"/>
</dbReference>
<dbReference type="HOGENOM" id="CLU_106619_0_0_9"/>
<dbReference type="OrthoDB" id="9798918at2"/>
<dbReference type="Proteomes" id="UP000001411">
    <property type="component" value="Chromosome"/>
</dbReference>
<dbReference type="HAMAP" id="MF_00489">
    <property type="entry name" value="UPF0178"/>
    <property type="match status" value="1"/>
</dbReference>
<dbReference type="InterPro" id="IPR003791">
    <property type="entry name" value="UPF0178"/>
</dbReference>
<dbReference type="NCBIfam" id="NF001095">
    <property type="entry name" value="PRK00124.1"/>
    <property type="match status" value="1"/>
</dbReference>
<dbReference type="PANTHER" id="PTHR35146">
    <property type="entry name" value="UPF0178 PROTEIN YAII"/>
    <property type="match status" value="1"/>
</dbReference>
<dbReference type="PANTHER" id="PTHR35146:SF1">
    <property type="entry name" value="UPF0178 PROTEIN YAII"/>
    <property type="match status" value="1"/>
</dbReference>
<dbReference type="Pfam" id="PF02639">
    <property type="entry name" value="DUF188"/>
    <property type="match status" value="1"/>
</dbReference>
<comment type="similarity">
    <text evidence="1">Belongs to the UPF0178 family.</text>
</comment>
<feature type="chain" id="PRO_0000176014" description="UPF0178 protein SE_0451">
    <location>
        <begin position="1"/>
        <end position="149"/>
    </location>
</feature>
<organism>
    <name type="scientific">Staphylococcus epidermidis (strain ATCC 12228 / FDA PCI 1200)</name>
    <dbReference type="NCBI Taxonomy" id="176280"/>
    <lineage>
        <taxon>Bacteria</taxon>
        <taxon>Bacillati</taxon>
        <taxon>Bacillota</taxon>
        <taxon>Bacilli</taxon>
        <taxon>Bacillales</taxon>
        <taxon>Staphylococcaceae</taxon>
        <taxon>Staphylococcus</taxon>
    </lineage>
</organism>
<gene>
    <name type="ordered locus">SE_0451</name>
</gene>
<protein>
    <recommendedName>
        <fullName evidence="1">UPF0178 protein SE_0451</fullName>
    </recommendedName>
</protein>
<accession>Q8CTJ9</accession>
<evidence type="ECO:0000255" key="1">
    <source>
        <dbReference type="HAMAP-Rule" id="MF_00489"/>
    </source>
</evidence>
<name>Y451_STAES</name>